<protein>
    <recommendedName>
        <fullName evidence="1">Large ribosomal subunit protein bL28</fullName>
    </recommendedName>
    <alternativeName>
        <fullName evidence="2">50S ribosomal protein L28</fullName>
    </alternativeName>
</protein>
<evidence type="ECO:0000255" key="1">
    <source>
        <dbReference type="HAMAP-Rule" id="MF_00373"/>
    </source>
</evidence>
<evidence type="ECO:0000305" key="2"/>
<name>RL28_RHILO</name>
<feature type="chain" id="PRO_0000178535" description="Large ribosomal subunit protein bL28">
    <location>
        <begin position="1"/>
        <end position="98"/>
    </location>
</feature>
<reference key="1">
    <citation type="journal article" date="2000" name="DNA Res.">
        <title>Complete genome structure of the nitrogen-fixing symbiotic bacterium Mesorhizobium loti.</title>
        <authorList>
            <person name="Kaneko T."/>
            <person name="Nakamura Y."/>
            <person name="Sato S."/>
            <person name="Asamizu E."/>
            <person name="Kato T."/>
            <person name="Sasamoto S."/>
            <person name="Watanabe A."/>
            <person name="Idesawa K."/>
            <person name="Ishikawa A."/>
            <person name="Kawashima K."/>
            <person name="Kimura T."/>
            <person name="Kishida Y."/>
            <person name="Kiyokawa C."/>
            <person name="Kohara M."/>
            <person name="Matsumoto M."/>
            <person name="Matsuno A."/>
            <person name="Mochizuki Y."/>
            <person name="Nakayama S."/>
            <person name="Nakazaki N."/>
            <person name="Shimpo S."/>
            <person name="Sugimoto M."/>
            <person name="Takeuchi C."/>
            <person name="Yamada M."/>
            <person name="Tabata S."/>
        </authorList>
    </citation>
    <scope>NUCLEOTIDE SEQUENCE [LARGE SCALE GENOMIC DNA]</scope>
    <source>
        <strain>LMG 29417 / CECT 9101 / MAFF 303099</strain>
    </source>
</reference>
<comment type="similarity">
    <text evidence="1">Belongs to the bacterial ribosomal protein bL28 family.</text>
</comment>
<accession>Q98FZ7</accession>
<gene>
    <name evidence="1" type="primary">rpmB</name>
    <name type="ordered locus">mlr3552</name>
</gene>
<organism>
    <name type="scientific">Mesorhizobium japonicum (strain LMG 29417 / CECT 9101 / MAFF 303099)</name>
    <name type="common">Mesorhizobium loti (strain MAFF 303099)</name>
    <dbReference type="NCBI Taxonomy" id="266835"/>
    <lineage>
        <taxon>Bacteria</taxon>
        <taxon>Pseudomonadati</taxon>
        <taxon>Pseudomonadota</taxon>
        <taxon>Alphaproteobacteria</taxon>
        <taxon>Hyphomicrobiales</taxon>
        <taxon>Phyllobacteriaceae</taxon>
        <taxon>Mesorhizobium</taxon>
    </lineage>
</organism>
<keyword id="KW-0687">Ribonucleoprotein</keyword>
<keyword id="KW-0689">Ribosomal protein</keyword>
<proteinExistence type="inferred from homology"/>
<dbReference type="EMBL" id="BA000012">
    <property type="protein sequence ID" value="BAB50419.1"/>
    <property type="molecule type" value="Genomic_DNA"/>
</dbReference>
<dbReference type="RefSeq" id="WP_010911765.1">
    <property type="nucleotide sequence ID" value="NC_002678.2"/>
</dbReference>
<dbReference type="SMR" id="Q98FZ7"/>
<dbReference type="GeneID" id="90989077"/>
<dbReference type="KEGG" id="mlo:mlr3552"/>
<dbReference type="eggNOG" id="COG0227">
    <property type="taxonomic scope" value="Bacteria"/>
</dbReference>
<dbReference type="HOGENOM" id="CLU_064548_4_2_5"/>
<dbReference type="Proteomes" id="UP000000552">
    <property type="component" value="Chromosome"/>
</dbReference>
<dbReference type="GO" id="GO:0022625">
    <property type="term" value="C:cytosolic large ribosomal subunit"/>
    <property type="evidence" value="ECO:0007669"/>
    <property type="project" value="TreeGrafter"/>
</dbReference>
<dbReference type="GO" id="GO:0003735">
    <property type="term" value="F:structural constituent of ribosome"/>
    <property type="evidence" value="ECO:0007669"/>
    <property type="project" value="InterPro"/>
</dbReference>
<dbReference type="GO" id="GO:0006412">
    <property type="term" value="P:translation"/>
    <property type="evidence" value="ECO:0007669"/>
    <property type="project" value="UniProtKB-UniRule"/>
</dbReference>
<dbReference type="Gene3D" id="2.30.170.40">
    <property type="entry name" value="Ribosomal protein L28/L24"/>
    <property type="match status" value="1"/>
</dbReference>
<dbReference type="HAMAP" id="MF_00373">
    <property type="entry name" value="Ribosomal_bL28"/>
    <property type="match status" value="1"/>
</dbReference>
<dbReference type="InterPro" id="IPR026569">
    <property type="entry name" value="Ribosomal_bL28"/>
</dbReference>
<dbReference type="InterPro" id="IPR034704">
    <property type="entry name" value="Ribosomal_bL28/bL31-like_sf"/>
</dbReference>
<dbReference type="InterPro" id="IPR001383">
    <property type="entry name" value="Ribosomal_bL28_bact-type"/>
</dbReference>
<dbReference type="InterPro" id="IPR037147">
    <property type="entry name" value="Ribosomal_bL28_sf"/>
</dbReference>
<dbReference type="NCBIfam" id="TIGR00009">
    <property type="entry name" value="L28"/>
    <property type="match status" value="1"/>
</dbReference>
<dbReference type="PANTHER" id="PTHR13528">
    <property type="entry name" value="39S RIBOSOMAL PROTEIN L28, MITOCHONDRIAL"/>
    <property type="match status" value="1"/>
</dbReference>
<dbReference type="PANTHER" id="PTHR13528:SF2">
    <property type="entry name" value="LARGE RIBOSOMAL SUBUNIT PROTEIN BL28M"/>
    <property type="match status" value="1"/>
</dbReference>
<dbReference type="Pfam" id="PF00830">
    <property type="entry name" value="Ribosomal_L28"/>
    <property type="match status" value="1"/>
</dbReference>
<dbReference type="SUPFAM" id="SSF143800">
    <property type="entry name" value="L28p-like"/>
    <property type="match status" value="1"/>
</dbReference>
<sequence length="98" mass="10819">MSRTCELTAKAVQTGNNVSHANNKTKRRFLPNLVNVTLISEALNQNVRLRISANALRSVEHRGGLDAFLAKADVKELSQRARLLKKQIAKKLAEQVAA</sequence>